<reference key="1">
    <citation type="journal article" date="2007" name="Proc. Natl. Acad. Sci. U.S.A.">
        <title>Genome plasticity of BCG and impact on vaccine efficacy.</title>
        <authorList>
            <person name="Brosch R."/>
            <person name="Gordon S.V."/>
            <person name="Garnier T."/>
            <person name="Eiglmeier K."/>
            <person name="Frigui W."/>
            <person name="Valenti P."/>
            <person name="Dos Santos S."/>
            <person name="Duthoy S."/>
            <person name="Lacroix C."/>
            <person name="Garcia-Pelayo C."/>
            <person name="Inwald J.K."/>
            <person name="Golby P."/>
            <person name="Garcia J.N."/>
            <person name="Hewinson R.G."/>
            <person name="Behr M.A."/>
            <person name="Quail M.A."/>
            <person name="Churcher C."/>
            <person name="Barrell B.G."/>
            <person name="Parkhill J."/>
            <person name="Cole S.T."/>
        </authorList>
    </citation>
    <scope>NUCLEOTIDE SEQUENCE [LARGE SCALE GENOMIC DNA]</scope>
    <source>
        <strain>BCG / Pasteur 1173P2</strain>
    </source>
</reference>
<proteinExistence type="inferred from homology"/>
<feature type="chain" id="PRO_0000382033" description="Prephenate dehydratase">
    <location>
        <begin position="1"/>
        <end position="321"/>
    </location>
</feature>
<feature type="domain" description="Prephenate dehydratase" evidence="2">
    <location>
        <begin position="3"/>
        <end position="189"/>
    </location>
</feature>
<feature type="domain" description="ACT" evidence="3">
    <location>
        <begin position="203"/>
        <end position="280"/>
    </location>
</feature>
<feature type="site" description="Essential for activity" evidence="1">
    <location>
        <position position="182"/>
    </location>
</feature>
<protein>
    <recommendedName>
        <fullName>Prephenate dehydratase</fullName>
        <shortName>PDT</shortName>
        <ecNumber>4.2.1.51</ecNumber>
    </recommendedName>
</protein>
<dbReference type="EC" id="4.2.1.51"/>
<dbReference type="EMBL" id="AM408590">
    <property type="protein sequence ID" value="CAL73891.1"/>
    <property type="molecule type" value="Genomic_DNA"/>
</dbReference>
<dbReference type="RefSeq" id="WP_003420906.1">
    <property type="nucleotide sequence ID" value="NC_008769.1"/>
</dbReference>
<dbReference type="SMR" id="A1KQH3"/>
<dbReference type="KEGG" id="mbb:BCG_3901c"/>
<dbReference type="HOGENOM" id="CLU_035008_0_0_11"/>
<dbReference type="UniPathway" id="UPA00121">
    <property type="reaction ID" value="UER00345"/>
</dbReference>
<dbReference type="Proteomes" id="UP000001472">
    <property type="component" value="Chromosome"/>
</dbReference>
<dbReference type="GO" id="GO:0005737">
    <property type="term" value="C:cytoplasm"/>
    <property type="evidence" value="ECO:0007669"/>
    <property type="project" value="TreeGrafter"/>
</dbReference>
<dbReference type="GO" id="GO:0004664">
    <property type="term" value="F:prephenate dehydratase activity"/>
    <property type="evidence" value="ECO:0007669"/>
    <property type="project" value="UniProtKB-EC"/>
</dbReference>
<dbReference type="GO" id="GO:0042803">
    <property type="term" value="F:protein homodimerization activity"/>
    <property type="evidence" value="ECO:0000250"/>
    <property type="project" value="UniProtKB"/>
</dbReference>
<dbReference type="GO" id="GO:0009094">
    <property type="term" value="P:L-phenylalanine biosynthetic process"/>
    <property type="evidence" value="ECO:0007669"/>
    <property type="project" value="UniProtKB-UniPathway"/>
</dbReference>
<dbReference type="CDD" id="cd04905">
    <property type="entry name" value="ACT_CM-PDT"/>
    <property type="match status" value="1"/>
</dbReference>
<dbReference type="CDD" id="cd13632">
    <property type="entry name" value="PBP2_Aa-PDT_like"/>
    <property type="match status" value="1"/>
</dbReference>
<dbReference type="FunFam" id="3.30.70.260:FF:000012">
    <property type="entry name" value="Prephenate dehydratase"/>
    <property type="match status" value="1"/>
</dbReference>
<dbReference type="FunFam" id="3.40.190.10:FF:000064">
    <property type="entry name" value="Prephenate dehydratase"/>
    <property type="match status" value="1"/>
</dbReference>
<dbReference type="FunFam" id="3.40.190.10:FF:000146">
    <property type="entry name" value="Prephenate dehydratase"/>
    <property type="match status" value="1"/>
</dbReference>
<dbReference type="Gene3D" id="3.30.70.260">
    <property type="match status" value="1"/>
</dbReference>
<dbReference type="Gene3D" id="3.40.190.10">
    <property type="entry name" value="Periplasmic binding protein-like II"/>
    <property type="match status" value="2"/>
</dbReference>
<dbReference type="InterPro" id="IPR045865">
    <property type="entry name" value="ACT-like_dom_sf"/>
</dbReference>
<dbReference type="InterPro" id="IPR002912">
    <property type="entry name" value="ACT_dom"/>
</dbReference>
<dbReference type="InterPro" id="IPR008242">
    <property type="entry name" value="Chor_mutase/pphenate_deHydtase"/>
</dbReference>
<dbReference type="InterPro" id="IPR001086">
    <property type="entry name" value="Preph_deHydtase"/>
</dbReference>
<dbReference type="InterPro" id="IPR018528">
    <property type="entry name" value="Preph_deHydtase_CS"/>
</dbReference>
<dbReference type="NCBIfam" id="NF008865">
    <property type="entry name" value="PRK11898.1"/>
    <property type="match status" value="1"/>
</dbReference>
<dbReference type="PANTHER" id="PTHR21022">
    <property type="entry name" value="PREPHENATE DEHYDRATASE P PROTEIN"/>
    <property type="match status" value="1"/>
</dbReference>
<dbReference type="PANTHER" id="PTHR21022:SF19">
    <property type="entry name" value="PREPHENATE DEHYDRATASE-RELATED"/>
    <property type="match status" value="1"/>
</dbReference>
<dbReference type="Pfam" id="PF01842">
    <property type="entry name" value="ACT"/>
    <property type="match status" value="1"/>
</dbReference>
<dbReference type="Pfam" id="PF00800">
    <property type="entry name" value="PDT"/>
    <property type="match status" value="1"/>
</dbReference>
<dbReference type="PIRSF" id="PIRSF001500">
    <property type="entry name" value="Chor_mut_pdt_Ppr"/>
    <property type="match status" value="1"/>
</dbReference>
<dbReference type="SUPFAM" id="SSF55021">
    <property type="entry name" value="ACT-like"/>
    <property type="match status" value="1"/>
</dbReference>
<dbReference type="SUPFAM" id="SSF53850">
    <property type="entry name" value="Periplasmic binding protein-like II"/>
    <property type="match status" value="1"/>
</dbReference>
<dbReference type="PROSITE" id="PS51671">
    <property type="entry name" value="ACT"/>
    <property type="match status" value="1"/>
</dbReference>
<dbReference type="PROSITE" id="PS00858">
    <property type="entry name" value="PREPHENATE_DEHYDR_2"/>
    <property type="match status" value="1"/>
</dbReference>
<dbReference type="PROSITE" id="PS51171">
    <property type="entry name" value="PREPHENATE_DEHYDR_3"/>
    <property type="match status" value="1"/>
</dbReference>
<accession>A1KQH3</accession>
<organism>
    <name type="scientific">Mycobacterium bovis (strain BCG / Pasteur 1173P2)</name>
    <dbReference type="NCBI Taxonomy" id="410289"/>
    <lineage>
        <taxon>Bacteria</taxon>
        <taxon>Bacillati</taxon>
        <taxon>Actinomycetota</taxon>
        <taxon>Actinomycetes</taxon>
        <taxon>Mycobacteriales</taxon>
        <taxon>Mycobacteriaceae</taxon>
        <taxon>Mycobacterium</taxon>
        <taxon>Mycobacterium tuberculosis complex</taxon>
    </lineage>
</organism>
<comment type="catalytic activity">
    <reaction>
        <text>prephenate + H(+) = 3-phenylpyruvate + CO2 + H2O</text>
        <dbReference type="Rhea" id="RHEA:21648"/>
        <dbReference type="ChEBI" id="CHEBI:15377"/>
        <dbReference type="ChEBI" id="CHEBI:15378"/>
        <dbReference type="ChEBI" id="CHEBI:16526"/>
        <dbReference type="ChEBI" id="CHEBI:18005"/>
        <dbReference type="ChEBI" id="CHEBI:29934"/>
        <dbReference type="EC" id="4.2.1.51"/>
    </reaction>
</comment>
<comment type="pathway">
    <text>Amino-acid biosynthesis; L-phenylalanine biosynthesis; phenylpyruvate from prephenate: step 1/1.</text>
</comment>
<comment type="subunit">
    <text evidence="1">Homodimer.</text>
</comment>
<gene>
    <name type="primary">pheA</name>
    <name type="ordered locus">BCG_3901c</name>
</gene>
<name>PHEA_MYCBP</name>
<sequence>MVRIAYLGPEGTFTEAALVRMVAAGLVPETGPDALQRMPVESAPAALAAVRDGGADYACVPIENSIDGSVLPTLDSLAIGVRLQVFAETTLDVTFSIVVKPGRNAADVRTLAAFPVAAAQVRQWLAAHLPAADLRPAYSNADAARQVADGLVDAAVTSPLAAARWGLAALADGVVDESNARTRFVLVGRPGPPPARTGADRTSAVLRIDNQPGALVAALAEFGIRGIDLTRIESRPTRTELGTYLFFVDCVGHIDDEAVAEALKAVHRRCADVRYLGSWPTGPAAGAQPPLVDEASRWLARLRAGKPEQTLVRPDDQGAQA</sequence>
<evidence type="ECO:0000250" key="1"/>
<evidence type="ECO:0000255" key="2">
    <source>
        <dbReference type="PROSITE-ProRule" id="PRU00517"/>
    </source>
</evidence>
<evidence type="ECO:0000255" key="3">
    <source>
        <dbReference type="PROSITE-ProRule" id="PRU01007"/>
    </source>
</evidence>
<keyword id="KW-0028">Amino-acid biosynthesis</keyword>
<keyword id="KW-0057">Aromatic amino acid biosynthesis</keyword>
<keyword id="KW-0456">Lyase</keyword>
<keyword id="KW-0584">Phenylalanine biosynthesis</keyword>